<organism>
    <name type="scientific">Burkholderia pseudomallei (strain K96243)</name>
    <dbReference type="NCBI Taxonomy" id="272560"/>
    <lineage>
        <taxon>Bacteria</taxon>
        <taxon>Pseudomonadati</taxon>
        <taxon>Pseudomonadota</taxon>
        <taxon>Betaproteobacteria</taxon>
        <taxon>Burkholderiales</taxon>
        <taxon>Burkholderiaceae</taxon>
        <taxon>Burkholderia</taxon>
        <taxon>pseudomallei group</taxon>
    </lineage>
</organism>
<accession>Q63VY0</accession>
<protein>
    <recommendedName>
        <fullName evidence="1">Glutamyl-Q tRNA(Asp) synthetase</fullName>
        <shortName evidence="1">Glu-Q-RSs</shortName>
        <ecNumber evidence="1">6.1.1.-</ecNumber>
    </recommendedName>
</protein>
<name>GLUQ_BURPS</name>
<proteinExistence type="inferred from homology"/>
<gene>
    <name evidence="1" type="primary">gluQ</name>
    <name type="ordered locus">BPSL1115</name>
</gene>
<keyword id="KW-0030">Aminoacyl-tRNA synthetase</keyword>
<keyword id="KW-0067">ATP-binding</keyword>
<keyword id="KW-0436">Ligase</keyword>
<keyword id="KW-0479">Metal-binding</keyword>
<keyword id="KW-0547">Nucleotide-binding</keyword>
<keyword id="KW-1185">Reference proteome</keyword>
<keyword id="KW-0862">Zinc</keyword>
<evidence type="ECO:0000255" key="1">
    <source>
        <dbReference type="HAMAP-Rule" id="MF_01428"/>
    </source>
</evidence>
<comment type="function">
    <text evidence="1">Catalyzes the tRNA-independent activation of glutamate in presence of ATP and the subsequent transfer of glutamate onto a tRNA(Asp). Glutamate is transferred on the 2-amino-5-(4,5-dihydroxy-2-cyclopenten-1-yl) moiety of the queuosine in the wobble position of the QUC anticodon.</text>
</comment>
<comment type="cofactor">
    <cofactor evidence="1">
        <name>Zn(2+)</name>
        <dbReference type="ChEBI" id="CHEBI:29105"/>
    </cofactor>
    <text evidence="1">Binds 1 zinc ion per subunit.</text>
</comment>
<comment type="similarity">
    <text evidence="1">Belongs to the class-I aminoacyl-tRNA synthetase family. GluQ subfamily.</text>
</comment>
<sequence>MTRYRGRFAPSPTGPLHFGSLVGALASWLDARAWGGAWLVRIEDIDGPRTVPGAAEDMLATLRGFGFIADEPPVWQSARVAHYEAALARLTAAGLVYPCGCSRKEIADSLRAAHERHTTLAYPGTCRTGLHGKPARAWRLRVPDGAAAVVAFDDRWQRAQTQNLATEVGDFVLKRADGQWAYQLAVVVDDGDANITHVVRGADLLDSTARQIYLQRCLGLPTPRYLHVPVVLDANGEKLSKQTGAAALDPAAPLPALAAAARHLGLALDGAACASLDAFQAAAIAAWDARFGPNARG</sequence>
<feature type="chain" id="PRO_0000208291" description="Glutamyl-Q tRNA(Asp) synthetase">
    <location>
        <begin position="1"/>
        <end position="297"/>
    </location>
</feature>
<feature type="short sequence motif" description="'HIGH' region">
    <location>
        <begin position="10"/>
        <end position="20"/>
    </location>
</feature>
<feature type="short sequence motif" description="'KMSKS' region">
    <location>
        <begin position="238"/>
        <end position="242"/>
    </location>
</feature>
<feature type="binding site" evidence="1">
    <location>
        <begin position="7"/>
        <end position="11"/>
    </location>
    <ligand>
        <name>L-glutamate</name>
        <dbReference type="ChEBI" id="CHEBI:29985"/>
    </ligand>
</feature>
<feature type="binding site" evidence="1">
    <location>
        <position position="43"/>
    </location>
    <ligand>
        <name>L-glutamate</name>
        <dbReference type="ChEBI" id="CHEBI:29985"/>
    </ligand>
</feature>
<feature type="binding site" evidence="1">
    <location>
        <position position="99"/>
    </location>
    <ligand>
        <name>Zn(2+)</name>
        <dbReference type="ChEBI" id="CHEBI:29105"/>
    </ligand>
</feature>
<feature type="binding site" evidence="1">
    <location>
        <position position="101"/>
    </location>
    <ligand>
        <name>Zn(2+)</name>
        <dbReference type="ChEBI" id="CHEBI:29105"/>
    </ligand>
</feature>
<feature type="binding site" evidence="1">
    <location>
        <position position="122"/>
    </location>
    <ligand>
        <name>Zn(2+)</name>
        <dbReference type="ChEBI" id="CHEBI:29105"/>
    </ligand>
</feature>
<feature type="binding site" evidence="1">
    <location>
        <position position="126"/>
    </location>
    <ligand>
        <name>Zn(2+)</name>
        <dbReference type="ChEBI" id="CHEBI:29105"/>
    </ligand>
</feature>
<feature type="binding site" evidence="1">
    <location>
        <position position="182"/>
    </location>
    <ligand>
        <name>L-glutamate</name>
        <dbReference type="ChEBI" id="CHEBI:29985"/>
    </ligand>
</feature>
<feature type="binding site" evidence="1">
    <location>
        <position position="200"/>
    </location>
    <ligand>
        <name>L-glutamate</name>
        <dbReference type="ChEBI" id="CHEBI:29985"/>
    </ligand>
</feature>
<feature type="binding site" evidence="1">
    <location>
        <position position="241"/>
    </location>
    <ligand>
        <name>ATP</name>
        <dbReference type="ChEBI" id="CHEBI:30616"/>
    </ligand>
</feature>
<dbReference type="EC" id="6.1.1.-" evidence="1"/>
<dbReference type="EMBL" id="BX571965">
    <property type="protein sequence ID" value="CAH35108.1"/>
    <property type="molecule type" value="Genomic_DNA"/>
</dbReference>
<dbReference type="RefSeq" id="YP_107736.1">
    <property type="nucleotide sequence ID" value="NC_006350.1"/>
</dbReference>
<dbReference type="SMR" id="Q63VY0"/>
<dbReference type="STRING" id="272560.BPSL1115"/>
<dbReference type="KEGG" id="bps:BPSL1115"/>
<dbReference type="PATRIC" id="fig|272560.51.peg.433"/>
<dbReference type="eggNOG" id="COG0008">
    <property type="taxonomic scope" value="Bacteria"/>
</dbReference>
<dbReference type="Proteomes" id="UP000000605">
    <property type="component" value="Chromosome 1"/>
</dbReference>
<dbReference type="GO" id="GO:0005829">
    <property type="term" value="C:cytosol"/>
    <property type="evidence" value="ECO:0007669"/>
    <property type="project" value="TreeGrafter"/>
</dbReference>
<dbReference type="GO" id="GO:0005524">
    <property type="term" value="F:ATP binding"/>
    <property type="evidence" value="ECO:0007669"/>
    <property type="project" value="UniProtKB-KW"/>
</dbReference>
<dbReference type="GO" id="GO:0004818">
    <property type="term" value="F:glutamate-tRNA ligase activity"/>
    <property type="evidence" value="ECO:0007669"/>
    <property type="project" value="TreeGrafter"/>
</dbReference>
<dbReference type="GO" id="GO:0008270">
    <property type="term" value="F:zinc ion binding"/>
    <property type="evidence" value="ECO:0007669"/>
    <property type="project" value="UniProtKB-UniRule"/>
</dbReference>
<dbReference type="GO" id="GO:0006424">
    <property type="term" value="P:glutamyl-tRNA aminoacylation"/>
    <property type="evidence" value="ECO:0007669"/>
    <property type="project" value="InterPro"/>
</dbReference>
<dbReference type="GO" id="GO:0006400">
    <property type="term" value="P:tRNA modification"/>
    <property type="evidence" value="ECO:0007669"/>
    <property type="project" value="InterPro"/>
</dbReference>
<dbReference type="Gene3D" id="3.40.50.620">
    <property type="entry name" value="HUPs"/>
    <property type="match status" value="1"/>
</dbReference>
<dbReference type="HAMAP" id="MF_01428">
    <property type="entry name" value="Glu_Q_tRNA_synth"/>
    <property type="match status" value="1"/>
</dbReference>
<dbReference type="InterPro" id="IPR022380">
    <property type="entry name" value="Glu-Q_tRNA(Asp)_Synthase"/>
</dbReference>
<dbReference type="InterPro" id="IPR000924">
    <property type="entry name" value="Glu/Gln-tRNA-synth"/>
</dbReference>
<dbReference type="InterPro" id="IPR020058">
    <property type="entry name" value="Glu/Gln-tRNA-synth_Ib_cat-dom"/>
</dbReference>
<dbReference type="InterPro" id="IPR049940">
    <property type="entry name" value="GluQ/Sye"/>
</dbReference>
<dbReference type="InterPro" id="IPR014729">
    <property type="entry name" value="Rossmann-like_a/b/a_fold"/>
</dbReference>
<dbReference type="NCBIfam" id="NF004313">
    <property type="entry name" value="PRK05710.1-2"/>
    <property type="match status" value="1"/>
</dbReference>
<dbReference type="NCBIfam" id="NF004314">
    <property type="entry name" value="PRK05710.1-3"/>
    <property type="match status" value="1"/>
</dbReference>
<dbReference type="NCBIfam" id="TIGR03838">
    <property type="entry name" value="queuosine_YadB"/>
    <property type="match status" value="1"/>
</dbReference>
<dbReference type="PANTHER" id="PTHR43311">
    <property type="entry name" value="GLUTAMATE--TRNA LIGASE"/>
    <property type="match status" value="1"/>
</dbReference>
<dbReference type="PANTHER" id="PTHR43311:SF1">
    <property type="entry name" value="GLUTAMYL-Q TRNA(ASP) SYNTHETASE"/>
    <property type="match status" value="1"/>
</dbReference>
<dbReference type="Pfam" id="PF00749">
    <property type="entry name" value="tRNA-synt_1c"/>
    <property type="match status" value="1"/>
</dbReference>
<dbReference type="PRINTS" id="PR00987">
    <property type="entry name" value="TRNASYNTHGLU"/>
</dbReference>
<dbReference type="SUPFAM" id="SSF52374">
    <property type="entry name" value="Nucleotidylyl transferase"/>
    <property type="match status" value="1"/>
</dbReference>
<reference key="1">
    <citation type="journal article" date="2004" name="Proc. Natl. Acad. Sci. U.S.A.">
        <title>Genomic plasticity of the causative agent of melioidosis, Burkholderia pseudomallei.</title>
        <authorList>
            <person name="Holden M.T.G."/>
            <person name="Titball R.W."/>
            <person name="Peacock S.J."/>
            <person name="Cerdeno-Tarraga A.-M."/>
            <person name="Atkins T."/>
            <person name="Crossman L.C."/>
            <person name="Pitt T."/>
            <person name="Churcher C."/>
            <person name="Mungall K.L."/>
            <person name="Bentley S.D."/>
            <person name="Sebaihia M."/>
            <person name="Thomson N.R."/>
            <person name="Bason N."/>
            <person name="Beacham I.R."/>
            <person name="Brooks K."/>
            <person name="Brown K.A."/>
            <person name="Brown N.F."/>
            <person name="Challis G.L."/>
            <person name="Cherevach I."/>
            <person name="Chillingworth T."/>
            <person name="Cronin A."/>
            <person name="Crossett B."/>
            <person name="Davis P."/>
            <person name="DeShazer D."/>
            <person name="Feltwell T."/>
            <person name="Fraser A."/>
            <person name="Hance Z."/>
            <person name="Hauser H."/>
            <person name="Holroyd S."/>
            <person name="Jagels K."/>
            <person name="Keith K.E."/>
            <person name="Maddison M."/>
            <person name="Moule S."/>
            <person name="Price C."/>
            <person name="Quail M.A."/>
            <person name="Rabbinowitsch E."/>
            <person name="Rutherford K."/>
            <person name="Sanders M."/>
            <person name="Simmonds M."/>
            <person name="Songsivilai S."/>
            <person name="Stevens K."/>
            <person name="Tumapa S."/>
            <person name="Vesaratchavest M."/>
            <person name="Whitehead S."/>
            <person name="Yeats C."/>
            <person name="Barrell B.G."/>
            <person name="Oyston P.C.F."/>
            <person name="Parkhill J."/>
        </authorList>
    </citation>
    <scope>NUCLEOTIDE SEQUENCE [LARGE SCALE GENOMIC DNA]</scope>
    <source>
        <strain>K96243</strain>
    </source>
</reference>